<accession>P61491</accession>
<accession>P45746</accession>
<accession>Q60018</accession>
<accession>Q9RA44</accession>
<feature type="chain" id="PRO_0000063583" description="Chaperonin GroEL">
    <location>
        <begin position="1" status="less than"/>
        <end position="145" status="greater than"/>
    </location>
</feature>
<feature type="non-terminal residue">
    <location>
        <position position="1"/>
    </location>
</feature>
<feature type="non-terminal residue">
    <location>
        <position position="145"/>
    </location>
</feature>
<feature type="strand" evidence="3">
    <location>
        <begin position="2"/>
        <end position="5"/>
    </location>
</feature>
<feature type="helix" evidence="3">
    <location>
        <begin position="11"/>
        <end position="13"/>
    </location>
</feature>
<feature type="turn" evidence="3">
    <location>
        <begin position="17"/>
        <end position="20"/>
    </location>
</feature>
<feature type="strand" evidence="3">
    <location>
        <begin position="21"/>
        <end position="36"/>
    </location>
</feature>
<feature type="helix" evidence="3">
    <location>
        <begin position="39"/>
        <end position="50"/>
    </location>
</feature>
<feature type="strand" evidence="3">
    <location>
        <begin position="56"/>
        <end position="63"/>
    </location>
</feature>
<feature type="helix" evidence="3">
    <location>
        <begin position="65"/>
        <end position="76"/>
    </location>
</feature>
<feature type="strand" evidence="3">
    <location>
        <begin position="82"/>
        <end position="86"/>
    </location>
</feature>
<feature type="helix" evidence="3">
    <location>
        <begin position="91"/>
        <end position="105"/>
    </location>
</feature>
<feature type="turn" evidence="3">
    <location>
        <begin position="112"/>
        <end position="115"/>
    </location>
</feature>
<feature type="helix" evidence="3">
    <location>
        <begin position="118"/>
        <end position="120"/>
    </location>
</feature>
<feature type="helix" evidence="3">
    <location>
        <begin position="123"/>
        <end position="125"/>
    </location>
</feature>
<feature type="strand" evidence="3">
    <location>
        <begin position="127"/>
        <end position="134"/>
    </location>
</feature>
<feature type="strand" evidence="3">
    <location>
        <begin position="139"/>
        <end position="144"/>
    </location>
</feature>
<organism>
    <name type="scientific">Thermus thermophilus</name>
    <dbReference type="NCBI Taxonomy" id="274"/>
    <lineage>
        <taxon>Bacteria</taxon>
        <taxon>Thermotogati</taxon>
        <taxon>Deinococcota</taxon>
        <taxon>Deinococci</taxon>
        <taxon>Thermales</taxon>
        <taxon>Thermaceae</taxon>
        <taxon>Thermus</taxon>
    </lineage>
</organism>
<keyword id="KW-0002">3D-structure</keyword>
<keyword id="KW-0067">ATP-binding</keyword>
<keyword id="KW-0143">Chaperone</keyword>
<keyword id="KW-0963">Cytoplasm</keyword>
<keyword id="KW-0413">Isomerase</keyword>
<keyword id="KW-0547">Nucleotide-binding</keyword>
<sequence length="145" mass="15736">GYQFDKGYISPYFVTNPETMEAVLEDAFILIVEKKVSNVRELLPILEQVAQTGKPLLIIAEDVEGEALATLVVNKLRGTLSVAAVKAPGFGDRRKEMLKDIAAVTGGTVISEELGFKLENATLSMLGRAERVRITKDETTIVGGK</sequence>
<dbReference type="EC" id="5.6.1.7" evidence="1"/>
<dbReference type="PDB" id="1SRV">
    <property type="method" value="X-ray"/>
    <property type="resolution" value="1.70 A"/>
    <property type="chains" value="A=1-145"/>
</dbReference>
<dbReference type="PDBsum" id="1SRV"/>
<dbReference type="SMR" id="P61491"/>
<dbReference type="EvolutionaryTrace" id="P61491"/>
<dbReference type="GO" id="GO:0005737">
    <property type="term" value="C:cytoplasm"/>
    <property type="evidence" value="ECO:0007669"/>
    <property type="project" value="UniProtKB-SubCell"/>
</dbReference>
<dbReference type="GO" id="GO:0005524">
    <property type="term" value="F:ATP binding"/>
    <property type="evidence" value="ECO:0007669"/>
    <property type="project" value="UniProtKB-KW"/>
</dbReference>
<dbReference type="GO" id="GO:0140662">
    <property type="term" value="F:ATP-dependent protein folding chaperone"/>
    <property type="evidence" value="ECO:0007669"/>
    <property type="project" value="InterPro"/>
</dbReference>
<dbReference type="GO" id="GO:0016853">
    <property type="term" value="F:isomerase activity"/>
    <property type="evidence" value="ECO:0007669"/>
    <property type="project" value="UniProtKB-KW"/>
</dbReference>
<dbReference type="GO" id="GO:0042026">
    <property type="term" value="P:protein refolding"/>
    <property type="evidence" value="ECO:0007669"/>
    <property type="project" value="InterPro"/>
</dbReference>
<dbReference type="FunFam" id="3.50.7.10:FF:000001">
    <property type="entry name" value="60 kDa chaperonin"/>
    <property type="match status" value="1"/>
</dbReference>
<dbReference type="Gene3D" id="3.50.7.10">
    <property type="entry name" value="GroEL"/>
    <property type="match status" value="1"/>
</dbReference>
<dbReference type="InterPro" id="IPR001844">
    <property type="entry name" value="Cpn60/GroEL"/>
</dbReference>
<dbReference type="InterPro" id="IPR002423">
    <property type="entry name" value="Cpn60/GroEL/TCP-1"/>
</dbReference>
<dbReference type="InterPro" id="IPR027409">
    <property type="entry name" value="GroEL-like_apical_dom_sf"/>
</dbReference>
<dbReference type="PANTHER" id="PTHR45633">
    <property type="entry name" value="60 KDA HEAT SHOCK PROTEIN, MITOCHONDRIAL"/>
    <property type="match status" value="1"/>
</dbReference>
<dbReference type="Pfam" id="PF00118">
    <property type="entry name" value="Cpn60_TCP1"/>
    <property type="match status" value="1"/>
</dbReference>
<dbReference type="SUPFAM" id="SSF52029">
    <property type="entry name" value="GroEL apical domain-like"/>
    <property type="match status" value="1"/>
</dbReference>
<reference key="1">
    <citation type="journal article" date="1999" name="Acta Crystallogr. D">
        <title>Taking MAD to the extreme: ultrafast protein structure determination.</title>
        <authorList>
            <person name="Walsh M.A."/>
            <person name="Dementieva I."/>
            <person name="Evans G."/>
            <person name="Sanishvili R."/>
            <person name="Joachimiak A."/>
        </authorList>
    </citation>
    <scope>X-RAY CRYSTALLOGRAPHY (1.7 ANGSTROMS)</scope>
</reference>
<gene>
    <name evidence="1" type="primary">groEL</name>
    <name type="synonym">cpnL</name>
    <name evidence="1" type="synonym">groL</name>
    <name type="synonym">hsp60</name>
    <name type="synonym">mopA</name>
</gene>
<protein>
    <recommendedName>
        <fullName evidence="1">Chaperonin GroEL</fullName>
        <ecNumber evidence="1">5.6.1.7</ecNumber>
    </recommendedName>
    <alternativeName>
        <fullName evidence="1">60 kDa chaperonin</fullName>
    </alternativeName>
    <alternativeName>
        <fullName evidence="1">Chaperonin-60</fullName>
        <shortName evidence="1">Cpn60</shortName>
    </alternativeName>
    <alternativeName>
        <fullName>Heat shock protein 60</fullName>
    </alternativeName>
</protein>
<proteinExistence type="evidence at protein level"/>
<evidence type="ECO:0000255" key="1">
    <source>
        <dbReference type="HAMAP-Rule" id="MF_00600"/>
    </source>
</evidence>
<evidence type="ECO:0000305" key="2"/>
<evidence type="ECO:0007829" key="3">
    <source>
        <dbReference type="PDB" id="1SRV"/>
    </source>
</evidence>
<comment type="function">
    <text evidence="1">Together with its co-chaperonin GroES, plays an essential role in assisting protein folding. The GroEL-GroES system forms a nano-cage that allows encapsulation of the non-native substrate proteins and provides a physical environment optimized to promote and accelerate protein folding.</text>
</comment>
<comment type="catalytic activity">
    <reaction evidence="1">
        <text>ATP + H2O + a folded polypeptide = ADP + phosphate + an unfolded polypeptide.</text>
        <dbReference type="EC" id="5.6.1.7"/>
    </reaction>
</comment>
<comment type="subunit">
    <text evidence="1">Forms a cylinder of 14 subunits composed of two heptameric rings stacked back-to-back. Interacts with the co-chaperonin GroES.</text>
</comment>
<comment type="subcellular location">
    <subcellularLocation>
        <location evidence="1">Cytoplasm</location>
    </subcellularLocation>
</comment>
<comment type="similarity">
    <text evidence="1 2">Belongs to the chaperonin (HSP60) family.</text>
</comment>
<comment type="caution">
    <text evidence="2">The sequence shown here has been extracted from PDB entry 1SRV.</text>
</comment>
<name>CH60_THETH</name>